<organism>
    <name type="scientific">Bacillus licheniformis (strain ATCC 14580 / DSM 13 / JCM 2505 / CCUG 7422 / NBRC 12200 / NCIMB 9375 / NCTC 10341 / NRRL NRS-1264 / Gibson 46)</name>
    <dbReference type="NCBI Taxonomy" id="279010"/>
    <lineage>
        <taxon>Bacteria</taxon>
        <taxon>Bacillati</taxon>
        <taxon>Bacillota</taxon>
        <taxon>Bacilli</taxon>
        <taxon>Bacillales</taxon>
        <taxon>Bacillaceae</taxon>
        <taxon>Bacillus</taxon>
    </lineage>
</organism>
<proteinExistence type="inferred from homology"/>
<keyword id="KW-1185">Reference proteome</keyword>
<keyword id="KW-0749">Sporulation</keyword>
<gene>
    <name evidence="1" type="primary">sspI</name>
    <name type="ordered locus">BLi03018</name>
    <name type="ordered locus">BL00309</name>
</gene>
<name>SSPI_BACLD</name>
<dbReference type="EMBL" id="AE017333">
    <property type="protein sequence ID" value="AAU41884.1"/>
    <property type="molecule type" value="Genomic_DNA"/>
</dbReference>
<dbReference type="EMBL" id="CP000002">
    <property type="protein sequence ID" value="AAU24526.1"/>
    <property type="molecule type" value="Genomic_DNA"/>
</dbReference>
<dbReference type="RefSeq" id="WP_011198181.1">
    <property type="nucleotide sequence ID" value="NC_006322.1"/>
</dbReference>
<dbReference type="STRING" id="279010.BL00309"/>
<dbReference type="GeneID" id="92860388"/>
<dbReference type="KEGG" id="bld:BLi03018"/>
<dbReference type="KEGG" id="bli:BL00309"/>
<dbReference type="eggNOG" id="ENOG5032YQ7">
    <property type="taxonomic scope" value="Bacteria"/>
</dbReference>
<dbReference type="HOGENOM" id="CLU_188877_0_0_9"/>
<dbReference type="Proteomes" id="UP000000606">
    <property type="component" value="Chromosome"/>
</dbReference>
<dbReference type="GO" id="GO:0030436">
    <property type="term" value="P:asexual sporulation"/>
    <property type="evidence" value="ECO:0007669"/>
    <property type="project" value="UniProtKB-UniRule"/>
</dbReference>
<dbReference type="GO" id="GO:0030435">
    <property type="term" value="P:sporulation resulting in formation of a cellular spore"/>
    <property type="evidence" value="ECO:0007669"/>
    <property type="project" value="UniProtKB-KW"/>
</dbReference>
<dbReference type="HAMAP" id="MF_00669">
    <property type="entry name" value="SspI"/>
    <property type="match status" value="1"/>
</dbReference>
<dbReference type="InterPro" id="IPR017525">
    <property type="entry name" value="SspI"/>
</dbReference>
<dbReference type="NCBIfam" id="TIGR03092">
    <property type="entry name" value="SASP_sspI"/>
    <property type="match status" value="1"/>
</dbReference>
<dbReference type="Pfam" id="PF14098">
    <property type="entry name" value="SSPI"/>
    <property type="match status" value="1"/>
</dbReference>
<comment type="subcellular location">
    <subcellularLocation>
        <location evidence="1">Spore core</location>
    </subcellularLocation>
</comment>
<comment type="induction">
    <text evidence="1">Expressed only in the forespore compartment of sporulating cells.</text>
</comment>
<comment type="similarity">
    <text evidence="1">Belongs to the SspI family.</text>
</comment>
<reference key="1">
    <citation type="journal article" date="2004" name="J. Mol. Microbiol. Biotechnol.">
        <title>The complete genome sequence of Bacillus licheniformis DSM13, an organism with great industrial potential.</title>
        <authorList>
            <person name="Veith B."/>
            <person name="Herzberg C."/>
            <person name="Steckel S."/>
            <person name="Feesche J."/>
            <person name="Maurer K.H."/>
            <person name="Ehrenreich P."/>
            <person name="Baeumer S."/>
            <person name="Henne A."/>
            <person name="Liesegang H."/>
            <person name="Merkl R."/>
            <person name="Ehrenreich A."/>
            <person name="Gottschalk G."/>
        </authorList>
    </citation>
    <scope>NUCLEOTIDE SEQUENCE [LARGE SCALE GENOMIC DNA]</scope>
    <source>
        <strain>ATCC 14580 / DSM 13 / JCM 2505 / CCUG 7422 / NBRC 12200 / NCIMB 9375 / NCTC 10341 / NRRL NRS-1264 / Gibson 46</strain>
    </source>
</reference>
<reference key="2">
    <citation type="journal article" date="2004" name="Genome Biol.">
        <title>Complete genome sequence of the industrial bacterium Bacillus licheniformis and comparisons with closely related Bacillus species.</title>
        <authorList>
            <person name="Rey M.W."/>
            <person name="Ramaiya P."/>
            <person name="Nelson B.A."/>
            <person name="Brody-Karpin S.D."/>
            <person name="Zaretsky E.J."/>
            <person name="Tang M."/>
            <person name="Lopez de Leon A."/>
            <person name="Xiang H."/>
            <person name="Gusti V."/>
            <person name="Clausen I.G."/>
            <person name="Olsen P.B."/>
            <person name="Rasmussen M.D."/>
            <person name="Andersen J.T."/>
            <person name="Joergensen P.L."/>
            <person name="Larsen T.S."/>
            <person name="Sorokin A."/>
            <person name="Bolotin A."/>
            <person name="Lapidus A."/>
            <person name="Galleron N."/>
            <person name="Ehrlich S.D."/>
            <person name="Berka R.M."/>
        </authorList>
    </citation>
    <scope>NUCLEOTIDE SEQUENCE [LARGE SCALE GENOMIC DNA]</scope>
    <source>
        <strain>ATCC 14580 / DSM 13 / JCM 2505 / CCUG 7422 / NBRC 12200 / NCIMB 9375 / NCTC 10341 / NRRL NRS-1264 / Gibson 46</strain>
    </source>
</reference>
<evidence type="ECO:0000255" key="1">
    <source>
        <dbReference type="HAMAP-Rule" id="MF_00669"/>
    </source>
</evidence>
<protein>
    <recommendedName>
        <fullName evidence="1">Small, acid-soluble spore protein I</fullName>
        <shortName evidence="1">SASP I</shortName>
    </recommendedName>
</protein>
<feature type="chain" id="PRO_0000218333" description="Small, acid-soluble spore protein I">
    <location>
        <begin position="1"/>
        <end position="70"/>
    </location>
</feature>
<sequence>MDLNLRHAVIANVSGNSQEELEHTIVDAIQSGEEKMLPGLGVLFEVIWQHATESDKTEMLETLEQGLKAK</sequence>
<accession>Q65GD0</accession>
<accession>Q62RT4</accession>